<feature type="chain" id="PRO_1000061914" description="UPF0250 protein YPTB1093">
    <location>
        <begin position="1"/>
        <end position="87"/>
    </location>
</feature>
<reference key="1">
    <citation type="journal article" date="2004" name="Proc. Natl. Acad. Sci. U.S.A.">
        <title>Insights into the evolution of Yersinia pestis through whole-genome comparison with Yersinia pseudotuberculosis.</title>
        <authorList>
            <person name="Chain P.S.G."/>
            <person name="Carniel E."/>
            <person name="Larimer F.W."/>
            <person name="Lamerdin J."/>
            <person name="Stoutland P.O."/>
            <person name="Regala W.M."/>
            <person name="Georgescu A.M."/>
            <person name="Vergez L.M."/>
            <person name="Land M.L."/>
            <person name="Motin V.L."/>
            <person name="Brubaker R.R."/>
            <person name="Fowler J."/>
            <person name="Hinnebusch J."/>
            <person name="Marceau M."/>
            <person name="Medigue C."/>
            <person name="Simonet M."/>
            <person name="Chenal-Francisque V."/>
            <person name="Souza B."/>
            <person name="Dacheux D."/>
            <person name="Elliott J.M."/>
            <person name="Derbise A."/>
            <person name="Hauser L.J."/>
            <person name="Garcia E."/>
        </authorList>
    </citation>
    <scope>NUCLEOTIDE SEQUENCE [LARGE SCALE GENOMIC DNA]</scope>
    <source>
        <strain>IP32953</strain>
    </source>
</reference>
<name>Y1093_YERPS</name>
<dbReference type="EMBL" id="BX936398">
    <property type="protein sequence ID" value="CAH20333.1"/>
    <property type="molecule type" value="Genomic_DNA"/>
</dbReference>
<dbReference type="SMR" id="Q66DF3"/>
<dbReference type="KEGG" id="ypo:BZ17_1450"/>
<dbReference type="KEGG" id="yps:YPTB1093"/>
<dbReference type="PATRIC" id="fig|273123.14.peg.1534"/>
<dbReference type="Proteomes" id="UP000001011">
    <property type="component" value="Chromosome"/>
</dbReference>
<dbReference type="GO" id="GO:0005829">
    <property type="term" value="C:cytosol"/>
    <property type="evidence" value="ECO:0007669"/>
    <property type="project" value="TreeGrafter"/>
</dbReference>
<dbReference type="FunFam" id="3.30.70.260:FF:000002">
    <property type="entry name" value="UPF0250 protein YbeD"/>
    <property type="match status" value="1"/>
</dbReference>
<dbReference type="Gene3D" id="3.30.70.260">
    <property type="match status" value="1"/>
</dbReference>
<dbReference type="HAMAP" id="MF_00659">
    <property type="entry name" value="UPF0250"/>
    <property type="match status" value="1"/>
</dbReference>
<dbReference type="InterPro" id="IPR007454">
    <property type="entry name" value="UPF0250_YbeD-like"/>
</dbReference>
<dbReference type="InterPro" id="IPR027471">
    <property type="entry name" value="YbeD-like_sf"/>
</dbReference>
<dbReference type="NCBIfam" id="NF003447">
    <property type="entry name" value="PRK04998.1"/>
    <property type="match status" value="1"/>
</dbReference>
<dbReference type="PANTHER" id="PTHR38036">
    <property type="entry name" value="UPF0250 PROTEIN YBED"/>
    <property type="match status" value="1"/>
</dbReference>
<dbReference type="PANTHER" id="PTHR38036:SF1">
    <property type="entry name" value="UPF0250 PROTEIN YBED"/>
    <property type="match status" value="1"/>
</dbReference>
<dbReference type="Pfam" id="PF04359">
    <property type="entry name" value="DUF493"/>
    <property type="match status" value="1"/>
</dbReference>
<dbReference type="SUPFAM" id="SSF117991">
    <property type="entry name" value="YbeD/HP0495-like"/>
    <property type="match status" value="1"/>
</dbReference>
<gene>
    <name type="ordered locus">YPTB1093</name>
</gene>
<organism>
    <name type="scientific">Yersinia pseudotuberculosis serotype I (strain IP32953)</name>
    <dbReference type="NCBI Taxonomy" id="273123"/>
    <lineage>
        <taxon>Bacteria</taxon>
        <taxon>Pseudomonadati</taxon>
        <taxon>Pseudomonadota</taxon>
        <taxon>Gammaproteobacteria</taxon>
        <taxon>Enterobacterales</taxon>
        <taxon>Yersiniaceae</taxon>
        <taxon>Yersinia</taxon>
    </lineage>
</organism>
<protein>
    <recommendedName>
        <fullName evidence="1">UPF0250 protein YPTB1093</fullName>
    </recommendedName>
</protein>
<accession>Q66DF3</accession>
<evidence type="ECO:0000255" key="1">
    <source>
        <dbReference type="HAMAP-Rule" id="MF_00659"/>
    </source>
</evidence>
<sequence length="87" mass="9805">MKTKLNELLEFPCSFTYKVMGIAEPQLVDQVVEVVQRHAPGEYTPQVKPSSKGNYHSVSITITATHIDQVETLYEELGNLELVKMVL</sequence>
<comment type="similarity">
    <text evidence="1">Belongs to the UPF0250 family.</text>
</comment>
<proteinExistence type="inferred from homology"/>